<keyword id="KW-0030">Aminoacyl-tRNA synthetase</keyword>
<keyword id="KW-0067">ATP-binding</keyword>
<keyword id="KW-0963">Cytoplasm</keyword>
<keyword id="KW-0436">Ligase</keyword>
<keyword id="KW-0479">Metal-binding</keyword>
<keyword id="KW-0547">Nucleotide-binding</keyword>
<keyword id="KW-0648">Protein biosynthesis</keyword>
<keyword id="KW-1185">Reference proteome</keyword>
<keyword id="KW-0694">RNA-binding</keyword>
<keyword id="KW-0820">tRNA-binding</keyword>
<keyword id="KW-0862">Zinc</keyword>
<name>SYT_RHILW</name>
<sequence>MSEAIFLTFPDGSVRSFPAGATGRDVAESISKSLAKSAVAIAIDGTVQDLSDTVADGKIEIITRKDGRALELIRHDAAHVMAEAVQELWPGTQVTIGPVIENGFYYDFAKNEPFTPDDLPKIEKKMKEIIARNAPFTKQIWSREKAKEVFAAKGENYKVELVDAIPAGQDLKIYNQGDWFDLCRGPHMASTGQVGTAFKLMKVAGAYWRGDSNNAMLSRIYGTAWADQADLDNYLHMLAEAEKRDHRKLGREMDLFHFQEEGPGVVFWHGKGWRIFQALVSYMRRRLAVDYEEVNAPQVLDTALWETSGHWGWYQENMFAVKSAHAMTHPEDKEADNRVFALKPMNCPGHVQIFKHGLKSYRELPIRLAEFGLVHRYEPSGALHGLMRVRGFTQDDAHIFCTDEQMAAECLKINDLILSVYEDFGFKEIVVKLSTRPEKRVGSDALWDRAEAVMTDVLKTIEAQSEGRIKTGILPGEGAFYGPKFEYTLKDAIGREWQCGTTQVDFNLPERFGAFYIDSNSEKTQPVMIHRAICGSMERFLGILIENFAGHLPLWVSPLQVVVATITSEADAYGLEVAEALREAGLNVETDFRNEKINYKVREHSVTKVPVIIVCGRKEAEERTVNIRRLGSQDQVSMGLDAAVDSLALEATPPDVRRKAEAKKARAA</sequence>
<proteinExistence type="inferred from homology"/>
<organism>
    <name type="scientific">Rhizobium leguminosarum bv. trifolii (strain WSM2304)</name>
    <dbReference type="NCBI Taxonomy" id="395492"/>
    <lineage>
        <taxon>Bacteria</taxon>
        <taxon>Pseudomonadati</taxon>
        <taxon>Pseudomonadota</taxon>
        <taxon>Alphaproteobacteria</taxon>
        <taxon>Hyphomicrobiales</taxon>
        <taxon>Rhizobiaceae</taxon>
        <taxon>Rhizobium/Agrobacterium group</taxon>
        <taxon>Rhizobium</taxon>
    </lineage>
</organism>
<accession>B5ZQK2</accession>
<reference key="1">
    <citation type="journal article" date="2010" name="Stand. Genomic Sci.">
        <title>Complete genome sequence of Rhizobium leguminosarum bv trifolii strain WSM2304, an effective microsymbiont of the South American clover Trifolium polymorphum.</title>
        <authorList>
            <person name="Reeve W."/>
            <person name="O'Hara G."/>
            <person name="Chain P."/>
            <person name="Ardley J."/>
            <person name="Brau L."/>
            <person name="Nandesena K."/>
            <person name="Tiwari R."/>
            <person name="Malfatti S."/>
            <person name="Kiss H."/>
            <person name="Lapidus A."/>
            <person name="Copeland A."/>
            <person name="Nolan M."/>
            <person name="Land M."/>
            <person name="Ivanova N."/>
            <person name="Mavromatis K."/>
            <person name="Markowitz V."/>
            <person name="Kyrpides N."/>
            <person name="Melino V."/>
            <person name="Denton M."/>
            <person name="Yates R."/>
            <person name="Howieson J."/>
        </authorList>
    </citation>
    <scope>NUCLEOTIDE SEQUENCE [LARGE SCALE GENOMIC DNA]</scope>
    <source>
        <strain>WSM2304</strain>
    </source>
</reference>
<protein>
    <recommendedName>
        <fullName evidence="1">Threonine--tRNA ligase</fullName>
        <ecNumber evidence="1">6.1.1.3</ecNumber>
    </recommendedName>
    <alternativeName>
        <fullName evidence="1">Threonyl-tRNA synthetase</fullName>
        <shortName evidence="1">ThrRS</shortName>
    </alternativeName>
</protein>
<feature type="chain" id="PRO_1000098602" description="Threonine--tRNA ligase">
    <location>
        <begin position="1"/>
        <end position="668"/>
    </location>
</feature>
<feature type="domain" description="TGS" evidence="2">
    <location>
        <begin position="1"/>
        <end position="64"/>
    </location>
</feature>
<feature type="region of interest" description="Catalytic" evidence="1">
    <location>
        <begin position="245"/>
        <end position="553"/>
    </location>
</feature>
<feature type="binding site" evidence="1">
    <location>
        <position position="347"/>
    </location>
    <ligand>
        <name>Zn(2+)</name>
        <dbReference type="ChEBI" id="CHEBI:29105"/>
    </ligand>
</feature>
<feature type="binding site" evidence="1">
    <location>
        <position position="398"/>
    </location>
    <ligand>
        <name>Zn(2+)</name>
        <dbReference type="ChEBI" id="CHEBI:29105"/>
    </ligand>
</feature>
<feature type="binding site" evidence="1">
    <location>
        <position position="530"/>
    </location>
    <ligand>
        <name>Zn(2+)</name>
        <dbReference type="ChEBI" id="CHEBI:29105"/>
    </ligand>
</feature>
<dbReference type="EC" id="6.1.1.3" evidence="1"/>
<dbReference type="EMBL" id="CP001191">
    <property type="protein sequence ID" value="ACI55130.1"/>
    <property type="molecule type" value="Genomic_DNA"/>
</dbReference>
<dbReference type="RefSeq" id="WP_012557744.1">
    <property type="nucleotide sequence ID" value="NC_011369.1"/>
</dbReference>
<dbReference type="SMR" id="B5ZQK2"/>
<dbReference type="STRING" id="395492.Rleg2_1845"/>
<dbReference type="KEGG" id="rlt:Rleg2_1845"/>
<dbReference type="eggNOG" id="COG0441">
    <property type="taxonomic scope" value="Bacteria"/>
</dbReference>
<dbReference type="HOGENOM" id="CLU_008554_0_1_5"/>
<dbReference type="Proteomes" id="UP000008330">
    <property type="component" value="Chromosome"/>
</dbReference>
<dbReference type="GO" id="GO:0005829">
    <property type="term" value="C:cytosol"/>
    <property type="evidence" value="ECO:0007669"/>
    <property type="project" value="TreeGrafter"/>
</dbReference>
<dbReference type="GO" id="GO:0005524">
    <property type="term" value="F:ATP binding"/>
    <property type="evidence" value="ECO:0007669"/>
    <property type="project" value="UniProtKB-UniRule"/>
</dbReference>
<dbReference type="GO" id="GO:0046872">
    <property type="term" value="F:metal ion binding"/>
    <property type="evidence" value="ECO:0007669"/>
    <property type="project" value="UniProtKB-KW"/>
</dbReference>
<dbReference type="GO" id="GO:0004829">
    <property type="term" value="F:threonine-tRNA ligase activity"/>
    <property type="evidence" value="ECO:0007669"/>
    <property type="project" value="UniProtKB-UniRule"/>
</dbReference>
<dbReference type="GO" id="GO:0000049">
    <property type="term" value="F:tRNA binding"/>
    <property type="evidence" value="ECO:0007669"/>
    <property type="project" value="UniProtKB-KW"/>
</dbReference>
<dbReference type="GO" id="GO:0006435">
    <property type="term" value="P:threonyl-tRNA aminoacylation"/>
    <property type="evidence" value="ECO:0007669"/>
    <property type="project" value="UniProtKB-UniRule"/>
</dbReference>
<dbReference type="CDD" id="cd01667">
    <property type="entry name" value="TGS_ThrRS"/>
    <property type="match status" value="1"/>
</dbReference>
<dbReference type="CDD" id="cd00860">
    <property type="entry name" value="ThrRS_anticodon"/>
    <property type="match status" value="1"/>
</dbReference>
<dbReference type="CDD" id="cd00771">
    <property type="entry name" value="ThrRS_core"/>
    <property type="match status" value="1"/>
</dbReference>
<dbReference type="FunFam" id="3.30.54.20:FF:000002">
    <property type="entry name" value="Threonine--tRNA ligase"/>
    <property type="match status" value="1"/>
</dbReference>
<dbReference type="FunFam" id="3.30.930.10:FF:000002">
    <property type="entry name" value="Threonine--tRNA ligase"/>
    <property type="match status" value="1"/>
</dbReference>
<dbReference type="FunFam" id="3.40.50.800:FF:000001">
    <property type="entry name" value="Threonine--tRNA ligase"/>
    <property type="match status" value="1"/>
</dbReference>
<dbReference type="FunFam" id="3.30.980.10:FF:000005">
    <property type="entry name" value="Threonyl-tRNA synthetase, mitochondrial"/>
    <property type="match status" value="1"/>
</dbReference>
<dbReference type="Gene3D" id="3.10.20.30">
    <property type="match status" value="1"/>
</dbReference>
<dbReference type="Gene3D" id="3.30.54.20">
    <property type="match status" value="1"/>
</dbReference>
<dbReference type="Gene3D" id="3.40.50.800">
    <property type="entry name" value="Anticodon-binding domain"/>
    <property type="match status" value="1"/>
</dbReference>
<dbReference type="Gene3D" id="3.30.930.10">
    <property type="entry name" value="Bira Bifunctional Protein, Domain 2"/>
    <property type="match status" value="1"/>
</dbReference>
<dbReference type="Gene3D" id="3.30.980.10">
    <property type="entry name" value="Threonyl-trna Synthetase, Chain A, domain 2"/>
    <property type="match status" value="1"/>
</dbReference>
<dbReference type="HAMAP" id="MF_00184">
    <property type="entry name" value="Thr_tRNA_synth"/>
    <property type="match status" value="1"/>
</dbReference>
<dbReference type="InterPro" id="IPR002314">
    <property type="entry name" value="aa-tRNA-synt_IIb"/>
</dbReference>
<dbReference type="InterPro" id="IPR006195">
    <property type="entry name" value="aa-tRNA-synth_II"/>
</dbReference>
<dbReference type="InterPro" id="IPR045864">
    <property type="entry name" value="aa-tRNA-synth_II/BPL/LPL"/>
</dbReference>
<dbReference type="InterPro" id="IPR004154">
    <property type="entry name" value="Anticodon-bd"/>
</dbReference>
<dbReference type="InterPro" id="IPR036621">
    <property type="entry name" value="Anticodon-bd_dom_sf"/>
</dbReference>
<dbReference type="InterPro" id="IPR012675">
    <property type="entry name" value="Beta-grasp_dom_sf"/>
</dbReference>
<dbReference type="InterPro" id="IPR004095">
    <property type="entry name" value="TGS"/>
</dbReference>
<dbReference type="InterPro" id="IPR012676">
    <property type="entry name" value="TGS-like"/>
</dbReference>
<dbReference type="InterPro" id="IPR002320">
    <property type="entry name" value="Thr-tRNA-ligase_IIa"/>
</dbReference>
<dbReference type="InterPro" id="IPR018163">
    <property type="entry name" value="Thr/Ala-tRNA-synth_IIc_edit"/>
</dbReference>
<dbReference type="InterPro" id="IPR047246">
    <property type="entry name" value="ThrRS_anticodon"/>
</dbReference>
<dbReference type="InterPro" id="IPR033728">
    <property type="entry name" value="ThrRS_core"/>
</dbReference>
<dbReference type="InterPro" id="IPR012947">
    <property type="entry name" value="tRNA_SAD"/>
</dbReference>
<dbReference type="NCBIfam" id="TIGR00418">
    <property type="entry name" value="thrS"/>
    <property type="match status" value="1"/>
</dbReference>
<dbReference type="PANTHER" id="PTHR11451:SF44">
    <property type="entry name" value="THREONINE--TRNA LIGASE, CHLOROPLASTIC_MITOCHONDRIAL 2"/>
    <property type="match status" value="1"/>
</dbReference>
<dbReference type="PANTHER" id="PTHR11451">
    <property type="entry name" value="THREONINE-TRNA LIGASE"/>
    <property type="match status" value="1"/>
</dbReference>
<dbReference type="Pfam" id="PF03129">
    <property type="entry name" value="HGTP_anticodon"/>
    <property type="match status" value="1"/>
</dbReference>
<dbReference type="Pfam" id="PF02824">
    <property type="entry name" value="TGS"/>
    <property type="match status" value="1"/>
</dbReference>
<dbReference type="Pfam" id="PF00587">
    <property type="entry name" value="tRNA-synt_2b"/>
    <property type="match status" value="1"/>
</dbReference>
<dbReference type="Pfam" id="PF07973">
    <property type="entry name" value="tRNA_SAD"/>
    <property type="match status" value="1"/>
</dbReference>
<dbReference type="PRINTS" id="PR01047">
    <property type="entry name" value="TRNASYNTHTHR"/>
</dbReference>
<dbReference type="SMART" id="SM00863">
    <property type="entry name" value="tRNA_SAD"/>
    <property type="match status" value="1"/>
</dbReference>
<dbReference type="SUPFAM" id="SSF52954">
    <property type="entry name" value="Class II aaRS ABD-related"/>
    <property type="match status" value="1"/>
</dbReference>
<dbReference type="SUPFAM" id="SSF55681">
    <property type="entry name" value="Class II aaRS and biotin synthetases"/>
    <property type="match status" value="1"/>
</dbReference>
<dbReference type="SUPFAM" id="SSF81271">
    <property type="entry name" value="TGS-like"/>
    <property type="match status" value="1"/>
</dbReference>
<dbReference type="SUPFAM" id="SSF55186">
    <property type="entry name" value="ThrRS/AlaRS common domain"/>
    <property type="match status" value="1"/>
</dbReference>
<dbReference type="PROSITE" id="PS50862">
    <property type="entry name" value="AA_TRNA_LIGASE_II"/>
    <property type="match status" value="1"/>
</dbReference>
<dbReference type="PROSITE" id="PS51880">
    <property type="entry name" value="TGS"/>
    <property type="match status" value="1"/>
</dbReference>
<comment type="function">
    <text evidence="1">Catalyzes the attachment of threonine to tRNA(Thr) in a two-step reaction: L-threonine is first activated by ATP to form Thr-AMP and then transferred to the acceptor end of tRNA(Thr). Also edits incorrectly charged L-seryl-tRNA(Thr).</text>
</comment>
<comment type="catalytic activity">
    <reaction evidence="1">
        <text>tRNA(Thr) + L-threonine + ATP = L-threonyl-tRNA(Thr) + AMP + diphosphate + H(+)</text>
        <dbReference type="Rhea" id="RHEA:24624"/>
        <dbReference type="Rhea" id="RHEA-COMP:9670"/>
        <dbReference type="Rhea" id="RHEA-COMP:9704"/>
        <dbReference type="ChEBI" id="CHEBI:15378"/>
        <dbReference type="ChEBI" id="CHEBI:30616"/>
        <dbReference type="ChEBI" id="CHEBI:33019"/>
        <dbReference type="ChEBI" id="CHEBI:57926"/>
        <dbReference type="ChEBI" id="CHEBI:78442"/>
        <dbReference type="ChEBI" id="CHEBI:78534"/>
        <dbReference type="ChEBI" id="CHEBI:456215"/>
        <dbReference type="EC" id="6.1.1.3"/>
    </reaction>
</comment>
<comment type="cofactor">
    <cofactor evidence="1">
        <name>Zn(2+)</name>
        <dbReference type="ChEBI" id="CHEBI:29105"/>
    </cofactor>
    <text evidence="1">Binds 1 zinc ion per subunit.</text>
</comment>
<comment type="subunit">
    <text evidence="1">Homodimer.</text>
</comment>
<comment type="subcellular location">
    <subcellularLocation>
        <location evidence="1">Cytoplasm</location>
    </subcellularLocation>
</comment>
<comment type="similarity">
    <text evidence="1">Belongs to the class-II aminoacyl-tRNA synthetase family.</text>
</comment>
<evidence type="ECO:0000255" key="1">
    <source>
        <dbReference type="HAMAP-Rule" id="MF_00184"/>
    </source>
</evidence>
<evidence type="ECO:0000255" key="2">
    <source>
        <dbReference type="PROSITE-ProRule" id="PRU01228"/>
    </source>
</evidence>
<gene>
    <name evidence="1" type="primary">thrS</name>
    <name type="ordered locus">Rleg2_1845</name>
</gene>